<feature type="chain" id="PRO_0000193496" description="ATP synthase subunit delta">
    <location>
        <begin position="1"/>
        <end position="179"/>
    </location>
</feature>
<gene>
    <name evidence="1" type="primary">atpH</name>
</gene>
<organism>
    <name type="scientific">Acidithiobacillus ferridurans</name>
    <dbReference type="NCBI Taxonomy" id="1232575"/>
    <lineage>
        <taxon>Bacteria</taxon>
        <taxon>Pseudomonadati</taxon>
        <taxon>Pseudomonadota</taxon>
        <taxon>Acidithiobacillia</taxon>
        <taxon>Acidithiobacillales</taxon>
        <taxon>Acidithiobacillaceae</taxon>
        <taxon>Acidithiobacillus</taxon>
    </lineage>
</organism>
<proteinExistence type="inferred from homology"/>
<keyword id="KW-0066">ATP synthesis</keyword>
<keyword id="KW-0997">Cell inner membrane</keyword>
<keyword id="KW-1003">Cell membrane</keyword>
<keyword id="KW-0139">CF(1)</keyword>
<keyword id="KW-0375">Hydrogen ion transport</keyword>
<keyword id="KW-0406">Ion transport</keyword>
<keyword id="KW-0472">Membrane</keyword>
<keyword id="KW-0813">Transport</keyword>
<name>ATPD_ACIFI</name>
<comment type="function">
    <text evidence="1">F(1)F(0) ATP synthase produces ATP from ADP in the presence of a proton or sodium gradient. F-type ATPases consist of two structural domains, F(1) containing the extramembraneous catalytic core and F(0) containing the membrane proton channel, linked together by a central stalk and a peripheral stalk. During catalysis, ATP synthesis in the catalytic domain of F(1) is coupled via a rotary mechanism of the central stalk subunits to proton translocation.</text>
</comment>
<comment type="function">
    <text evidence="1">This protein is part of the stalk that links CF(0) to CF(1). It either transmits conformational changes from CF(0) to CF(1) or is implicated in proton conduction.</text>
</comment>
<comment type="subunit">
    <text evidence="1">F-type ATPases have 2 components, F(1) - the catalytic core - and F(0) - the membrane proton channel. F(1) has five subunits: alpha(3), beta(3), gamma(1), delta(1), epsilon(1). F(0) has three main subunits: a(1), b(2) and c(10-14). The alpha and beta chains form an alternating ring which encloses part of the gamma chain. F(1) is attached to F(0) by a central stalk formed by the gamma and epsilon chains, while a peripheral stalk is formed by the delta and b chains.</text>
</comment>
<comment type="subcellular location">
    <subcellularLocation>
        <location evidence="1">Cell inner membrane</location>
        <topology evidence="1">Peripheral membrane protein</topology>
    </subcellularLocation>
</comment>
<comment type="similarity">
    <text evidence="1">Belongs to the ATPase delta chain family.</text>
</comment>
<dbReference type="EMBL" id="M81087">
    <property type="protein sequence ID" value="AAA53124.1"/>
    <property type="molecule type" value="Genomic_DNA"/>
</dbReference>
<dbReference type="SMR" id="P41170"/>
<dbReference type="GO" id="GO:0005886">
    <property type="term" value="C:plasma membrane"/>
    <property type="evidence" value="ECO:0007669"/>
    <property type="project" value="UniProtKB-SubCell"/>
</dbReference>
<dbReference type="GO" id="GO:0045259">
    <property type="term" value="C:proton-transporting ATP synthase complex"/>
    <property type="evidence" value="ECO:0007669"/>
    <property type="project" value="UniProtKB-KW"/>
</dbReference>
<dbReference type="GO" id="GO:0046933">
    <property type="term" value="F:proton-transporting ATP synthase activity, rotational mechanism"/>
    <property type="evidence" value="ECO:0007669"/>
    <property type="project" value="UniProtKB-UniRule"/>
</dbReference>
<dbReference type="Gene3D" id="1.10.520.20">
    <property type="entry name" value="N-terminal domain of the delta subunit of the F1F0-ATP synthase"/>
    <property type="match status" value="1"/>
</dbReference>
<dbReference type="HAMAP" id="MF_01416">
    <property type="entry name" value="ATP_synth_delta_bact"/>
    <property type="match status" value="1"/>
</dbReference>
<dbReference type="InterPro" id="IPR026015">
    <property type="entry name" value="ATP_synth_OSCP/delta_N_sf"/>
</dbReference>
<dbReference type="InterPro" id="IPR020781">
    <property type="entry name" value="ATPase_OSCP/d_CS"/>
</dbReference>
<dbReference type="InterPro" id="IPR000711">
    <property type="entry name" value="ATPase_OSCP/dsu"/>
</dbReference>
<dbReference type="NCBIfam" id="TIGR01145">
    <property type="entry name" value="ATP_synt_delta"/>
    <property type="match status" value="1"/>
</dbReference>
<dbReference type="PANTHER" id="PTHR11910">
    <property type="entry name" value="ATP SYNTHASE DELTA CHAIN"/>
    <property type="match status" value="1"/>
</dbReference>
<dbReference type="Pfam" id="PF00213">
    <property type="entry name" value="OSCP"/>
    <property type="match status" value="1"/>
</dbReference>
<dbReference type="PRINTS" id="PR00125">
    <property type="entry name" value="ATPASEDELTA"/>
</dbReference>
<dbReference type="SUPFAM" id="SSF47928">
    <property type="entry name" value="N-terminal domain of the delta subunit of the F1F0-ATP synthase"/>
    <property type="match status" value="1"/>
</dbReference>
<dbReference type="PROSITE" id="PS00389">
    <property type="entry name" value="ATPASE_DELTA"/>
    <property type="match status" value="1"/>
</dbReference>
<reference key="1">
    <citation type="journal article" date="1994" name="FEMS Microbiol. Lett.">
        <title>The F1 genes of the F1F0 ATP synthase from the acidophilic bacterium Thiobacillus ferrooxidans complement Escherichia coli F1 unc mutants.</title>
        <authorList>
            <person name="Brown L.D."/>
            <person name="Dennehy M.E."/>
            <person name="Rawlings D.E."/>
        </authorList>
    </citation>
    <scope>NUCLEOTIDE SEQUENCE [GENOMIC DNA]</scope>
    <source>
        <strain>ATCC 33020 / DSM 29468 / JCM 18981 / 11Fe</strain>
    </source>
</reference>
<accession>P41170</accession>
<evidence type="ECO:0000255" key="1">
    <source>
        <dbReference type="HAMAP-Rule" id="MF_01416"/>
    </source>
</evidence>
<sequence length="179" mass="19574">MADLITVARPYAEALMGWRKRAARNRPGRMHCRRLPAMIADVQAQAFLTDPERRDAEKVSLLSAVPVAVDVKAWKAFLALLIHNDRWPATAEIGTLFADAMRRAEGVVDVLVTSAIALDAGQKTAVQSALERRFAGHKVRFREAVDAALIGGLVIHTGDLTIDASVRGQVQQLARTLRS</sequence>
<protein>
    <recommendedName>
        <fullName evidence="1">ATP synthase subunit delta</fullName>
    </recommendedName>
    <alternativeName>
        <fullName evidence="1">ATP synthase F(1) sector subunit delta</fullName>
    </alternativeName>
    <alternativeName>
        <fullName evidence="1">F-type ATPase subunit delta</fullName>
        <shortName evidence="1">F-ATPase subunit delta</shortName>
    </alternativeName>
</protein>